<reference key="1">
    <citation type="journal article" date="2007" name="PLoS ONE">
        <title>Analysis of the neurotoxin complex genes in Clostridium botulinum A1-A4 and B1 strains: BoNT/A3, /Ba4 and /B1 clusters are located within plasmids.</title>
        <authorList>
            <person name="Smith T.J."/>
            <person name="Hill K.K."/>
            <person name="Foley B.T."/>
            <person name="Detter J.C."/>
            <person name="Munk A.C."/>
            <person name="Bruce D.C."/>
            <person name="Doggett N.A."/>
            <person name="Smith L.A."/>
            <person name="Marks J.D."/>
            <person name="Xie G."/>
            <person name="Brettin T.S."/>
        </authorList>
    </citation>
    <scope>NUCLEOTIDE SEQUENCE [LARGE SCALE GENOMIC DNA]</scope>
    <source>
        <strain>Loch Maree / Type A3</strain>
    </source>
</reference>
<evidence type="ECO:0000255" key="1">
    <source>
        <dbReference type="HAMAP-Rule" id="MF_01543"/>
    </source>
</evidence>
<sequence length="557" mass="60714">MFKSDIEIAQESKMKNIKDIAENIGLTEEDIDLYGKYKCKISLDVLKNNKDKKDGKLILVTAINPTPAGEGKSTVTVGLGQALWKKNKKAVIALREPSLGPVFGIKGGAAGGGYSQVVPMEDINLHFTGDMHAITSANNLLAAAIDNHIHQGNILKIDQRRILFKRVMDMNDRALRNVIVALGGKVNGFPREDGFMITVASEIMAILCLAENLMDLKNKMGEILVAYSTEGNPIYCKDLEVQGAMALLMKDAIKPNLVQTLENTPAIIHGGPFANIAHGCNSILGTKMALKLGDYVITEAGFGADLGAEKFFDIKCRKANLKPNCVVIVATVRALKYNSGIPKENLKEQNMEALSKGIKNLGKHIENVNKFGVPAVVAINKFISDTEEEIEFIKKYCKELGAEVSIAEVWEKGGNGGLELADKVLDTIENKESKFNPIYEETLNIKQKIETIAQEIYGAEGVDYSKEAEKQISEIEKLDLDKKPVCMAKTQYSLSDDAKLLGRPCGFRINVKEVRISNGAGFIVVLTGNVMTMPGLPKKPAANNMNVLSDGNIVGLF</sequence>
<protein>
    <recommendedName>
        <fullName evidence="1">Formate--tetrahydrofolate ligase</fullName>
        <ecNumber evidence="1">6.3.4.3</ecNumber>
    </recommendedName>
    <alternativeName>
        <fullName evidence="1">Formyltetrahydrofolate synthetase</fullName>
        <shortName evidence="1">FHS</shortName>
        <shortName evidence="1">FTHFS</shortName>
    </alternativeName>
</protein>
<comment type="catalytic activity">
    <reaction evidence="1">
        <text>(6S)-5,6,7,8-tetrahydrofolate + formate + ATP = (6R)-10-formyltetrahydrofolate + ADP + phosphate</text>
        <dbReference type="Rhea" id="RHEA:20221"/>
        <dbReference type="ChEBI" id="CHEBI:15740"/>
        <dbReference type="ChEBI" id="CHEBI:30616"/>
        <dbReference type="ChEBI" id="CHEBI:43474"/>
        <dbReference type="ChEBI" id="CHEBI:57453"/>
        <dbReference type="ChEBI" id="CHEBI:195366"/>
        <dbReference type="ChEBI" id="CHEBI:456216"/>
        <dbReference type="EC" id="6.3.4.3"/>
    </reaction>
</comment>
<comment type="pathway">
    <text evidence="1">One-carbon metabolism; tetrahydrofolate interconversion.</text>
</comment>
<comment type="similarity">
    <text evidence="1">Belongs to the formate--tetrahydrofolate ligase family.</text>
</comment>
<organism>
    <name type="scientific">Clostridium botulinum (strain Loch Maree / Type A3)</name>
    <dbReference type="NCBI Taxonomy" id="498214"/>
    <lineage>
        <taxon>Bacteria</taxon>
        <taxon>Bacillati</taxon>
        <taxon>Bacillota</taxon>
        <taxon>Clostridia</taxon>
        <taxon>Eubacteriales</taxon>
        <taxon>Clostridiaceae</taxon>
        <taxon>Clostridium</taxon>
    </lineage>
</organism>
<proteinExistence type="inferred from homology"/>
<feature type="chain" id="PRO_1000146679" description="Formate--tetrahydrofolate ligase">
    <location>
        <begin position="1"/>
        <end position="557"/>
    </location>
</feature>
<feature type="binding site" evidence="1">
    <location>
        <begin position="66"/>
        <end position="73"/>
    </location>
    <ligand>
        <name>ATP</name>
        <dbReference type="ChEBI" id="CHEBI:30616"/>
    </ligand>
</feature>
<keyword id="KW-0067">ATP-binding</keyword>
<keyword id="KW-0436">Ligase</keyword>
<keyword id="KW-0547">Nucleotide-binding</keyword>
<keyword id="KW-0554">One-carbon metabolism</keyword>
<accession>B1KTC6</accession>
<name>FTHS_CLOBM</name>
<gene>
    <name evidence="1" type="primary">fhs</name>
    <name type="ordered locus">CLK_2988</name>
</gene>
<dbReference type="EC" id="6.3.4.3" evidence="1"/>
<dbReference type="EMBL" id="CP000962">
    <property type="protein sequence ID" value="ACA54465.1"/>
    <property type="molecule type" value="Genomic_DNA"/>
</dbReference>
<dbReference type="RefSeq" id="WP_012342564.1">
    <property type="nucleotide sequence ID" value="NC_010520.1"/>
</dbReference>
<dbReference type="SMR" id="B1KTC6"/>
<dbReference type="KEGG" id="cbl:CLK_2988"/>
<dbReference type="HOGENOM" id="CLU_003601_3_3_9"/>
<dbReference type="UniPathway" id="UPA00193"/>
<dbReference type="GO" id="GO:0005524">
    <property type="term" value="F:ATP binding"/>
    <property type="evidence" value="ECO:0007669"/>
    <property type="project" value="UniProtKB-UniRule"/>
</dbReference>
<dbReference type="GO" id="GO:0004329">
    <property type="term" value="F:formate-tetrahydrofolate ligase activity"/>
    <property type="evidence" value="ECO:0007669"/>
    <property type="project" value="UniProtKB-UniRule"/>
</dbReference>
<dbReference type="GO" id="GO:0035999">
    <property type="term" value="P:tetrahydrofolate interconversion"/>
    <property type="evidence" value="ECO:0007669"/>
    <property type="project" value="UniProtKB-UniRule"/>
</dbReference>
<dbReference type="CDD" id="cd00477">
    <property type="entry name" value="FTHFS"/>
    <property type="match status" value="1"/>
</dbReference>
<dbReference type="FunFam" id="3.30.1510.10:FF:000001">
    <property type="entry name" value="Formate--tetrahydrofolate ligase"/>
    <property type="match status" value="1"/>
</dbReference>
<dbReference type="FunFam" id="3.10.410.10:FF:000001">
    <property type="entry name" value="Putative formate--tetrahydrofolate ligase"/>
    <property type="match status" value="1"/>
</dbReference>
<dbReference type="Gene3D" id="3.30.1510.10">
    <property type="entry name" value="Domain 2, N(10)-formyltetrahydrofolate synthetase"/>
    <property type="match status" value="1"/>
</dbReference>
<dbReference type="Gene3D" id="3.10.410.10">
    <property type="entry name" value="Formyltetrahydrofolate synthetase, domain 3"/>
    <property type="match status" value="1"/>
</dbReference>
<dbReference type="Gene3D" id="3.40.50.300">
    <property type="entry name" value="P-loop containing nucleotide triphosphate hydrolases"/>
    <property type="match status" value="1"/>
</dbReference>
<dbReference type="HAMAP" id="MF_01543">
    <property type="entry name" value="FTHFS"/>
    <property type="match status" value="1"/>
</dbReference>
<dbReference type="InterPro" id="IPR000559">
    <property type="entry name" value="Formate_THF_ligase"/>
</dbReference>
<dbReference type="InterPro" id="IPR020628">
    <property type="entry name" value="Formate_THF_ligase_CS"/>
</dbReference>
<dbReference type="InterPro" id="IPR027417">
    <property type="entry name" value="P-loop_NTPase"/>
</dbReference>
<dbReference type="NCBIfam" id="NF010030">
    <property type="entry name" value="PRK13505.1"/>
    <property type="match status" value="1"/>
</dbReference>
<dbReference type="Pfam" id="PF01268">
    <property type="entry name" value="FTHFS"/>
    <property type="match status" value="1"/>
</dbReference>
<dbReference type="SUPFAM" id="SSF52540">
    <property type="entry name" value="P-loop containing nucleoside triphosphate hydrolases"/>
    <property type="match status" value="1"/>
</dbReference>
<dbReference type="PROSITE" id="PS00721">
    <property type="entry name" value="FTHFS_1"/>
    <property type="match status" value="1"/>
</dbReference>
<dbReference type="PROSITE" id="PS00722">
    <property type="entry name" value="FTHFS_2"/>
    <property type="match status" value="1"/>
</dbReference>